<keyword id="KW-0158">Chromosome</keyword>
<keyword id="KW-0597">Phosphoprotein</keyword>
<keyword id="KW-1185">Reference proteome</keyword>
<proteinExistence type="evidence at transcript level"/>
<gene>
    <name type="primary">RTF2</name>
    <name type="synonym">RTFDC1</name>
    <name type="ORF">RCJMB04_16p11</name>
</gene>
<protein>
    <recommendedName>
        <fullName evidence="3">Replication termination factor 2</fullName>
        <shortName>RTF2</shortName>
    </recommendedName>
    <alternativeName>
        <fullName>Protein RTF2 homolog</fullName>
    </alternativeName>
    <alternativeName>
        <fullName>Replication termination factor 2 domain-containing protein 1</fullName>
    </alternativeName>
</protein>
<feature type="chain" id="PRO_0000327238" description="Replication termination factor 2">
    <location>
        <begin position="1"/>
        <end position="306"/>
    </location>
</feature>
<feature type="region of interest" description="Disordered" evidence="2">
    <location>
        <begin position="193"/>
        <end position="265"/>
    </location>
</feature>
<feature type="compositionally biased region" description="Basic and acidic residues" evidence="2">
    <location>
        <begin position="235"/>
        <end position="250"/>
    </location>
</feature>
<comment type="function">
    <text evidence="1">Replication termination factor which is a component of the elongating replisome. Interacts with nascent DNA.</text>
</comment>
<comment type="subcellular location">
    <subcellularLocation>
        <location evidence="1">Chromosome</location>
    </subcellularLocation>
    <text evidence="1">Localizes at the replication fork.</text>
</comment>
<comment type="similarity">
    <text evidence="3">Belongs to the rtf2 family.</text>
</comment>
<accession>Q5ZJN1</accession>
<evidence type="ECO:0000250" key="1">
    <source>
        <dbReference type="UniProtKB" id="Q9BY42"/>
    </source>
</evidence>
<evidence type="ECO:0000256" key="2">
    <source>
        <dbReference type="SAM" id="MobiDB-lite"/>
    </source>
</evidence>
<evidence type="ECO:0000305" key="3"/>
<sequence length="306" mass="34222">MGCDGGTIPKRHELVKGPRKAVKVDKTAELVARWYYCTLSQEKLCRPIVACELGRLYNKDAVIEFLLDKSADKTPMEAASHIKSLKNVTELNLADNPAWSGDKESKKGDTYDDIQSARFICPVVGLEMNGRHRFCFLRNCGCVFSERALKEIKTEVCHKCGVPFQEEDVIILNGNKEDVEVLKKRMEDRRLKSKLEKKSKKCKSAESAAQQVTTEDSPGPSKVKNSKDCIASSSGEKRHIIFTKSSDDRSSSVPGKVNKASTATKRSIADTATRNLRHTNLFTTHSSAKRPKEECSNWVTHTAYCF</sequence>
<organism>
    <name type="scientific">Gallus gallus</name>
    <name type="common">Chicken</name>
    <dbReference type="NCBI Taxonomy" id="9031"/>
    <lineage>
        <taxon>Eukaryota</taxon>
        <taxon>Metazoa</taxon>
        <taxon>Chordata</taxon>
        <taxon>Craniata</taxon>
        <taxon>Vertebrata</taxon>
        <taxon>Euteleostomi</taxon>
        <taxon>Archelosauria</taxon>
        <taxon>Archosauria</taxon>
        <taxon>Dinosauria</taxon>
        <taxon>Saurischia</taxon>
        <taxon>Theropoda</taxon>
        <taxon>Coelurosauria</taxon>
        <taxon>Aves</taxon>
        <taxon>Neognathae</taxon>
        <taxon>Galloanserae</taxon>
        <taxon>Galliformes</taxon>
        <taxon>Phasianidae</taxon>
        <taxon>Phasianinae</taxon>
        <taxon>Gallus</taxon>
    </lineage>
</organism>
<dbReference type="EMBL" id="AJ720403">
    <property type="protein sequence ID" value="CAG32062.1"/>
    <property type="molecule type" value="mRNA"/>
</dbReference>
<dbReference type="FunCoup" id="Q5ZJN1">
    <property type="interactions" value="2790"/>
</dbReference>
<dbReference type="STRING" id="9031.ENSGALP00000012478"/>
<dbReference type="PaxDb" id="9031-ENSGALP00000012478"/>
<dbReference type="VEuPathDB" id="HostDB:geneid_419329"/>
<dbReference type="eggNOG" id="KOG3113">
    <property type="taxonomic scope" value="Eukaryota"/>
</dbReference>
<dbReference type="HOGENOM" id="CLU_048955_1_0_1"/>
<dbReference type="InParanoid" id="Q5ZJN1"/>
<dbReference type="PhylomeDB" id="Q5ZJN1"/>
<dbReference type="Proteomes" id="UP000000539">
    <property type="component" value="Unassembled WGS sequence"/>
</dbReference>
<dbReference type="GO" id="GO:0005634">
    <property type="term" value="C:nucleus"/>
    <property type="evidence" value="ECO:0000318"/>
    <property type="project" value="GO_Central"/>
</dbReference>
<dbReference type="GO" id="GO:0005657">
    <property type="term" value="C:replication fork"/>
    <property type="evidence" value="ECO:0000250"/>
    <property type="project" value="UniProtKB"/>
</dbReference>
<dbReference type="GO" id="GO:0003677">
    <property type="term" value="F:DNA binding"/>
    <property type="evidence" value="ECO:0000250"/>
    <property type="project" value="UniProtKB"/>
</dbReference>
<dbReference type="GO" id="GO:0072711">
    <property type="term" value="P:cellular response to hydroxyurea"/>
    <property type="evidence" value="ECO:0000250"/>
    <property type="project" value="UniProtKB"/>
</dbReference>
<dbReference type="GO" id="GO:1902979">
    <property type="term" value="P:mitotic DNA replication termination"/>
    <property type="evidence" value="ECO:0007669"/>
    <property type="project" value="InterPro"/>
</dbReference>
<dbReference type="GO" id="GO:0097752">
    <property type="term" value="P:regulation of DNA stability"/>
    <property type="evidence" value="ECO:0000250"/>
    <property type="project" value="UniProtKB"/>
</dbReference>
<dbReference type="CDD" id="cd16653">
    <property type="entry name" value="RING-like_Rtf2"/>
    <property type="match status" value="1"/>
</dbReference>
<dbReference type="InterPro" id="IPR006735">
    <property type="entry name" value="Rtf2"/>
</dbReference>
<dbReference type="InterPro" id="IPR027799">
    <property type="entry name" value="Rtf2_RING-finger"/>
</dbReference>
<dbReference type="PANTHER" id="PTHR12775">
    <property type="entry name" value="PROTEIN C20ORF43 HOMOLOG"/>
    <property type="match status" value="1"/>
</dbReference>
<dbReference type="PANTHER" id="PTHR12775:SF0">
    <property type="entry name" value="REPLICATION TERMINATION FACTOR 2"/>
    <property type="match status" value="1"/>
</dbReference>
<dbReference type="Pfam" id="PF04641">
    <property type="entry name" value="Rtf2"/>
    <property type="match status" value="1"/>
</dbReference>
<name>RTF2_CHICK</name>
<reference key="1">
    <citation type="journal article" date="2005" name="Genome Biol.">
        <title>Full-length cDNAs from chicken bursal lymphocytes to facilitate gene function analysis.</title>
        <authorList>
            <person name="Caldwell R.B."/>
            <person name="Kierzek A.M."/>
            <person name="Arakawa H."/>
            <person name="Bezzubov Y."/>
            <person name="Zaim J."/>
            <person name="Fiedler P."/>
            <person name="Kutter S."/>
            <person name="Blagodatski A."/>
            <person name="Kostovska D."/>
            <person name="Koter M."/>
            <person name="Plachy J."/>
            <person name="Carninci P."/>
            <person name="Hayashizaki Y."/>
            <person name="Buerstedde J.-M."/>
        </authorList>
    </citation>
    <scope>NUCLEOTIDE SEQUENCE [LARGE SCALE MRNA]</scope>
    <source>
        <strain>CB</strain>
        <tissue>Bursa of Fabricius</tissue>
    </source>
</reference>